<evidence type="ECO:0000250" key="1"/>
<evidence type="ECO:0000255" key="2">
    <source>
        <dbReference type="PROSITE-ProRule" id="PRU00214"/>
    </source>
</evidence>
<evidence type="ECO:0000305" key="3"/>
<proteinExistence type="evidence at transcript level"/>
<keyword id="KW-0963">Cytoplasm</keyword>
<keyword id="KW-1017">Isopeptide bond</keyword>
<keyword id="KW-0479">Metal-binding</keyword>
<keyword id="KW-0539">Nucleus</keyword>
<keyword id="KW-1185">Reference proteome</keyword>
<keyword id="KW-0687">Ribonucleoprotein</keyword>
<keyword id="KW-0689">Ribosomal protein</keyword>
<keyword id="KW-0832">Ubl conjugation</keyword>
<keyword id="KW-0862">Zinc</keyword>
<keyword id="KW-0863">Zinc-finger</keyword>
<sequence length="155" mass="17682">MQIFVKTLTGKTITLEVESSDTIDNVKAKIQDKEGIPPDQQRLIFAGKQLEDGRTLADYNIQKESTLHLVLRLRGGAKKRKKKTYTKPKKIKHKHKKVKLAVLQFYKVDDATGKVTRLRKECPNTECGAGVFMANHFDRHYCGKCGLTYVYNQKA</sequence>
<accession>P27923</accession>
<accession>O82079</accession>
<accession>P03993</accession>
<accession>P69319</accession>
<organism>
    <name type="scientific">Zea mays</name>
    <name type="common">Maize</name>
    <dbReference type="NCBI Taxonomy" id="4577"/>
    <lineage>
        <taxon>Eukaryota</taxon>
        <taxon>Viridiplantae</taxon>
        <taxon>Streptophyta</taxon>
        <taxon>Embryophyta</taxon>
        <taxon>Tracheophyta</taxon>
        <taxon>Spermatophyta</taxon>
        <taxon>Magnoliopsida</taxon>
        <taxon>Liliopsida</taxon>
        <taxon>Poales</taxon>
        <taxon>Poaceae</taxon>
        <taxon>PACMAD clade</taxon>
        <taxon>Panicoideae</taxon>
        <taxon>Andropogonodae</taxon>
        <taxon>Andropogoneae</taxon>
        <taxon>Tripsacinae</taxon>
        <taxon>Zea</taxon>
    </lineage>
</organism>
<protein>
    <recommendedName>
        <fullName evidence="3">Ubiquitin-ribosomal protein eS31 fusion protein</fullName>
    </recommendedName>
    <component>
        <recommendedName>
            <fullName>Ubiquitin</fullName>
        </recommendedName>
    </component>
    <component>
        <recommendedName>
            <fullName evidence="3">Small ribosomal subunit protein eS31</fullName>
        </recommendedName>
        <alternativeName>
            <fullName>40S ribosomal protein S27a</fullName>
        </alternativeName>
    </component>
</protein>
<reference key="1">
    <citation type="journal article" date="1989" name="Plant Mol. Biol.">
        <title>Sequence analysis and transcriptional regulation by heat shock of polyubiquitin transcripts from maize.</title>
        <authorList>
            <person name="Christensen A.H."/>
            <person name="Quail P.H."/>
        </authorList>
    </citation>
    <scope>NUCLEOTIDE SEQUENCE [GENOMIC DNA]</scope>
</reference>
<reference key="2">
    <citation type="journal article" date="1991" name="Gene">
        <title>Characterization of the structure and transcription of a ubiquitin fusion gene from maize.</title>
        <authorList>
            <person name="Chen K."/>
            <person name="Rubenstein I."/>
        </authorList>
    </citation>
    <scope>NUCLEOTIDE SEQUENCE [GENOMIC DNA]</scope>
</reference>
<reference key="3">
    <citation type="submission" date="1995-10" db="EMBL/GenBank/DDBJ databases">
        <authorList>
            <person name="Chevalier C."/>
            <person name="le Querrec F."/>
            <person name="Raymond P."/>
        </authorList>
    </citation>
    <scope>NUCLEOTIDE SEQUENCE [MRNA]</scope>
    <source>
        <strain>cv. DEA</strain>
        <tissue>Root tip</tissue>
    </source>
</reference>
<gene>
    <name type="primary">UBF9</name>
    <name type="synonym">RPS27A</name>
</gene>
<dbReference type="EMBL" id="M68937">
    <property type="protein sequence ID" value="AAA33519.1"/>
    <property type="molecule type" value="Genomic_DNA"/>
</dbReference>
<dbReference type="EMBL" id="X92422">
    <property type="protein sequence ID" value="CAA63150.1"/>
    <property type="molecule type" value="mRNA"/>
</dbReference>
<dbReference type="RefSeq" id="NP_001105472.1">
    <property type="nucleotide sequence ID" value="NM_001112002.1"/>
</dbReference>
<dbReference type="RefSeq" id="NP_001131602.1">
    <property type="nucleotide sequence ID" value="NM_001138130.1"/>
</dbReference>
<dbReference type="SMR" id="P27923"/>
<dbReference type="FunCoup" id="P27923">
    <property type="interactions" value="2518"/>
</dbReference>
<dbReference type="STRING" id="4577.P27923"/>
<dbReference type="PaxDb" id="4577-GRMZM2G431821_P01"/>
<dbReference type="EnsemblPlants" id="Zm00001eb369510_T001">
    <property type="protein sequence ID" value="Zm00001eb369510_P001"/>
    <property type="gene ID" value="Zm00001eb369510"/>
</dbReference>
<dbReference type="GeneID" id="100192952"/>
<dbReference type="GeneID" id="101027200"/>
<dbReference type="Gramene" id="Zm00001eb369510_T001">
    <property type="protein sequence ID" value="Zm00001eb369510_P001"/>
    <property type="gene ID" value="Zm00001eb369510"/>
</dbReference>
<dbReference type="KEGG" id="zma:100192952"/>
<dbReference type="KEGG" id="zma:101027200"/>
<dbReference type="MaizeGDB" id="26015"/>
<dbReference type="MaizeGDB" id="65187"/>
<dbReference type="eggNOG" id="KOG0004">
    <property type="taxonomic scope" value="Eukaryota"/>
</dbReference>
<dbReference type="HOGENOM" id="CLU_010412_2_0_1"/>
<dbReference type="InParanoid" id="P27923"/>
<dbReference type="OrthoDB" id="1649877at2759"/>
<dbReference type="Proteomes" id="UP000007305">
    <property type="component" value="Chromosome 8"/>
</dbReference>
<dbReference type="ExpressionAtlas" id="P27923">
    <property type="expression patterns" value="baseline and differential"/>
</dbReference>
<dbReference type="GO" id="GO:0005737">
    <property type="term" value="C:cytoplasm"/>
    <property type="evidence" value="ECO:0000318"/>
    <property type="project" value="GO_Central"/>
</dbReference>
<dbReference type="GO" id="GO:0005634">
    <property type="term" value="C:nucleus"/>
    <property type="evidence" value="ECO:0000318"/>
    <property type="project" value="GO_Central"/>
</dbReference>
<dbReference type="GO" id="GO:1990904">
    <property type="term" value="C:ribonucleoprotein complex"/>
    <property type="evidence" value="ECO:0007669"/>
    <property type="project" value="UniProtKB-KW"/>
</dbReference>
<dbReference type="GO" id="GO:0005840">
    <property type="term" value="C:ribosome"/>
    <property type="evidence" value="ECO:0007669"/>
    <property type="project" value="UniProtKB-KW"/>
</dbReference>
<dbReference type="GO" id="GO:0003729">
    <property type="term" value="F:mRNA binding"/>
    <property type="evidence" value="ECO:0007669"/>
    <property type="project" value="UniProtKB-ARBA"/>
</dbReference>
<dbReference type="GO" id="GO:0031386">
    <property type="term" value="F:protein tag activity"/>
    <property type="evidence" value="ECO:0000318"/>
    <property type="project" value="GO_Central"/>
</dbReference>
<dbReference type="GO" id="GO:0003735">
    <property type="term" value="F:structural constituent of ribosome"/>
    <property type="evidence" value="ECO:0007669"/>
    <property type="project" value="InterPro"/>
</dbReference>
<dbReference type="GO" id="GO:0031625">
    <property type="term" value="F:ubiquitin protein ligase binding"/>
    <property type="evidence" value="ECO:0000318"/>
    <property type="project" value="GO_Central"/>
</dbReference>
<dbReference type="GO" id="GO:0008270">
    <property type="term" value="F:zinc ion binding"/>
    <property type="evidence" value="ECO:0007669"/>
    <property type="project" value="UniProtKB-KW"/>
</dbReference>
<dbReference type="GO" id="GO:0019941">
    <property type="term" value="P:modification-dependent protein catabolic process"/>
    <property type="evidence" value="ECO:0000318"/>
    <property type="project" value="GO_Central"/>
</dbReference>
<dbReference type="GO" id="GO:0016567">
    <property type="term" value="P:protein ubiquitination"/>
    <property type="evidence" value="ECO:0000318"/>
    <property type="project" value="GO_Central"/>
</dbReference>
<dbReference type="GO" id="GO:0006412">
    <property type="term" value="P:translation"/>
    <property type="evidence" value="ECO:0007669"/>
    <property type="project" value="InterPro"/>
</dbReference>
<dbReference type="CDD" id="cd01803">
    <property type="entry name" value="Ubl_ubiquitin"/>
    <property type="match status" value="1"/>
</dbReference>
<dbReference type="FunFam" id="3.10.20.90:FF:000008">
    <property type="entry name" value="Ubiquitin-40S ribosomal protein S27a"/>
    <property type="match status" value="1"/>
</dbReference>
<dbReference type="Gene3D" id="6.20.50.150">
    <property type="match status" value="1"/>
</dbReference>
<dbReference type="Gene3D" id="3.10.20.90">
    <property type="entry name" value="Phosphatidylinositol 3-kinase Catalytic Subunit, Chain A, domain 1"/>
    <property type="match status" value="1"/>
</dbReference>
<dbReference type="InterPro" id="IPR002906">
    <property type="entry name" value="Ribosomal_eS31"/>
</dbReference>
<dbReference type="InterPro" id="IPR038582">
    <property type="entry name" value="Ribosomal_eS31_euk-type_sf"/>
</dbReference>
<dbReference type="InterPro" id="IPR011332">
    <property type="entry name" value="Ribosomal_zn-bd"/>
</dbReference>
<dbReference type="InterPro" id="IPR000626">
    <property type="entry name" value="Ubiquitin-like_dom"/>
</dbReference>
<dbReference type="InterPro" id="IPR029071">
    <property type="entry name" value="Ubiquitin-like_domsf"/>
</dbReference>
<dbReference type="InterPro" id="IPR019954">
    <property type="entry name" value="Ubiquitin_CS"/>
</dbReference>
<dbReference type="InterPro" id="IPR019956">
    <property type="entry name" value="Ubiquitin_dom"/>
</dbReference>
<dbReference type="InterPro" id="IPR050158">
    <property type="entry name" value="Ubiquitin_ubiquitin-like"/>
</dbReference>
<dbReference type="PANTHER" id="PTHR10666">
    <property type="entry name" value="UBIQUITIN"/>
    <property type="match status" value="1"/>
</dbReference>
<dbReference type="Pfam" id="PF01599">
    <property type="entry name" value="Ribosomal_S27"/>
    <property type="match status" value="1"/>
</dbReference>
<dbReference type="Pfam" id="PF00240">
    <property type="entry name" value="ubiquitin"/>
    <property type="match status" value="1"/>
</dbReference>
<dbReference type="PRINTS" id="PR00348">
    <property type="entry name" value="UBIQUITIN"/>
</dbReference>
<dbReference type="SMART" id="SM01402">
    <property type="entry name" value="Ribosomal_S27"/>
    <property type="match status" value="1"/>
</dbReference>
<dbReference type="SMART" id="SM00213">
    <property type="entry name" value="UBQ"/>
    <property type="match status" value="1"/>
</dbReference>
<dbReference type="SUPFAM" id="SSF54236">
    <property type="entry name" value="Ubiquitin-like"/>
    <property type="match status" value="1"/>
</dbReference>
<dbReference type="SUPFAM" id="SSF57829">
    <property type="entry name" value="Zn-binding ribosomal proteins"/>
    <property type="match status" value="1"/>
</dbReference>
<dbReference type="PROSITE" id="PS00299">
    <property type="entry name" value="UBIQUITIN_1"/>
    <property type="match status" value="1"/>
</dbReference>
<dbReference type="PROSITE" id="PS50053">
    <property type="entry name" value="UBIQUITIN_2"/>
    <property type="match status" value="1"/>
</dbReference>
<comment type="function">
    <molecule>Ubiquitin</molecule>
    <text evidence="1">Exists either covalently attached to another protein, or free (unanchored). When covalently bound, it is conjugated to target proteins via an isopeptide bond either as a monomer (monoubiquitin), a polymer linked via different Lys residues of the ubiquitin (polyubiquitin chains) or a linear polymer linked via the initiator Met of the ubiquitin (linear polyubiquitin chains). Polyubiquitin chains, when attached to a target protein, have different functions depending on the Lys residue of the ubiquitin that is linked: Lys-48-linked is involved in protein degradation via the proteasome. Linear polymer chains formed via attachment by the initiator Met lead to cell signaling. Ubiquitin is usually conjugated to Lys residues of target proteins, however, in rare cases, conjugation to Cys or Ser residues has been observed. When polyubiquitin is free (unanchored-polyubiquitin), it also has distinct roles, such as in activation of protein kinases, and in signaling (By similarity).</text>
</comment>
<comment type="function">
    <molecule>Small ribosomal subunit protein eS31</molecule>
    <text>Component of the 40S subunit of the ribosome.</text>
</comment>
<comment type="subunit">
    <molecule>Small ribosomal subunit protein eS31</molecule>
    <text evidence="1">Part of the 40S ribosomal subunit.</text>
</comment>
<comment type="subcellular location">
    <molecule>Ubiquitin</molecule>
    <subcellularLocation>
        <location evidence="1">Cytoplasm</location>
    </subcellularLocation>
    <subcellularLocation>
        <location evidence="1">Nucleus</location>
    </subcellularLocation>
</comment>
<comment type="miscellaneous">
    <text>Ubiquitin is generally synthesized as a polyubiquitin precursor with tandem head to tail repeats. Often, there are one to three additional amino acids after the last repeat, removed in the mature protein. Alternatively, ubiquitin extension protein is synthesized as a single copy of ubiquitin fused to a ribosomal protein (either eL40 or eS31) or to an ubiquitin-related protein (either RUB1 or RUB2). Following translation, extension protein is cleaved from ubiquitin.</text>
</comment>
<comment type="similarity">
    <text evidence="3">In the N-terminal section; belongs to the ubiquitin family.</text>
</comment>
<comment type="similarity">
    <text evidence="3">In the C-terminal section; belongs to the eukaryotic ribosomal protein eS31 family.</text>
</comment>
<name>RS27A_MAIZE</name>
<feature type="chain" id="PRO_0000114846" description="Ubiquitin">
    <location>
        <begin position="1"/>
        <end position="76"/>
    </location>
</feature>
<feature type="chain" id="PRO_0000137682" description="Small ribosomal subunit protein eS31">
    <location>
        <begin position="77"/>
        <end position="155"/>
    </location>
</feature>
<feature type="domain" description="Ubiquitin-like" evidence="2">
    <location>
        <begin position="1"/>
        <end position="76"/>
    </location>
</feature>
<feature type="zinc finger region" description="C4-type">
    <location>
        <begin position="122"/>
        <end position="145"/>
    </location>
</feature>
<feature type="cross-link" description="Glycyl lysine isopeptide (Lys-Gly) (interchain with G-Cter in ubiquitin)" evidence="1">
    <location>
        <position position="48"/>
    </location>
</feature>
<feature type="cross-link" description="Glycyl lysine isopeptide (Gly-Lys) (interchain with K-? in acceptor proteins)" evidence="2">
    <location>
        <position position="76"/>
    </location>
</feature>
<feature type="sequence conflict" description="In Ref. 3; CAA63150." evidence="3" ref="3">
    <original>R</original>
    <variation>P</variation>
    <location>
        <position position="80"/>
    </location>
</feature>
<feature type="sequence conflict" description="In Ref. 3; CAA63150." evidence="3" ref="3">
    <original>E</original>
    <variation>D</variation>
    <location>
        <position position="121"/>
    </location>
</feature>
<feature type="sequence conflict" description="In Ref. 3; CAA63150." evidence="3" ref="3">
    <original>T</original>
    <variation>A</variation>
    <location>
        <position position="125"/>
    </location>
</feature>
<feature type="sequence conflict" description="In Ref. 3; CAA63150." evidence="3" ref="3">
    <original>G</original>
    <variation>H</variation>
    <location>
        <position position="128"/>
    </location>
</feature>
<feature type="sequence conflict" description="In Ref. 3; CAA63150." evidence="3" ref="3">
    <original>K</original>
    <variation>Q</variation>
    <location>
        <position position="154"/>
    </location>
</feature>